<accession>C1CM10</accession>
<dbReference type="EC" id="6.3.2.4" evidence="2"/>
<dbReference type="EMBL" id="CP000920">
    <property type="protein sequence ID" value="ACO20433.1"/>
    <property type="molecule type" value="Genomic_DNA"/>
</dbReference>
<dbReference type="RefSeq" id="WP_000814643.1">
    <property type="nucleotide sequence ID" value="NC_012467.1"/>
</dbReference>
<dbReference type="SMR" id="C1CM10"/>
<dbReference type="KEGG" id="spp:SPP_1689"/>
<dbReference type="HOGENOM" id="CLU_039268_0_0_9"/>
<dbReference type="UniPathway" id="UPA00219"/>
<dbReference type="GO" id="GO:0005829">
    <property type="term" value="C:cytosol"/>
    <property type="evidence" value="ECO:0007669"/>
    <property type="project" value="TreeGrafter"/>
</dbReference>
<dbReference type="GO" id="GO:0005524">
    <property type="term" value="F:ATP binding"/>
    <property type="evidence" value="ECO:0007669"/>
    <property type="project" value="UniProtKB-KW"/>
</dbReference>
<dbReference type="GO" id="GO:0008716">
    <property type="term" value="F:D-alanine-D-alanine ligase activity"/>
    <property type="evidence" value="ECO:0007669"/>
    <property type="project" value="UniProtKB-UniRule"/>
</dbReference>
<dbReference type="GO" id="GO:0046872">
    <property type="term" value="F:metal ion binding"/>
    <property type="evidence" value="ECO:0007669"/>
    <property type="project" value="UniProtKB-KW"/>
</dbReference>
<dbReference type="GO" id="GO:0071555">
    <property type="term" value="P:cell wall organization"/>
    <property type="evidence" value="ECO:0007669"/>
    <property type="project" value="UniProtKB-KW"/>
</dbReference>
<dbReference type="GO" id="GO:0009252">
    <property type="term" value="P:peptidoglycan biosynthetic process"/>
    <property type="evidence" value="ECO:0007669"/>
    <property type="project" value="UniProtKB-UniRule"/>
</dbReference>
<dbReference type="GO" id="GO:0008360">
    <property type="term" value="P:regulation of cell shape"/>
    <property type="evidence" value="ECO:0007669"/>
    <property type="project" value="UniProtKB-KW"/>
</dbReference>
<dbReference type="FunFam" id="3.30.1490.20:FF:000007">
    <property type="entry name" value="D-alanine--D-alanine ligase"/>
    <property type="match status" value="1"/>
</dbReference>
<dbReference type="FunFam" id="3.30.470.20:FF:000008">
    <property type="entry name" value="D-alanine--D-alanine ligase"/>
    <property type="match status" value="1"/>
</dbReference>
<dbReference type="FunFam" id="3.40.50.20:FF:000029">
    <property type="entry name" value="D-alanine--D-alanine ligase"/>
    <property type="match status" value="1"/>
</dbReference>
<dbReference type="Gene3D" id="3.40.50.20">
    <property type="match status" value="1"/>
</dbReference>
<dbReference type="Gene3D" id="3.30.1490.20">
    <property type="entry name" value="ATP-grasp fold, A domain"/>
    <property type="match status" value="1"/>
</dbReference>
<dbReference type="Gene3D" id="3.30.470.20">
    <property type="entry name" value="ATP-grasp fold, B domain"/>
    <property type="match status" value="1"/>
</dbReference>
<dbReference type="HAMAP" id="MF_00047">
    <property type="entry name" value="Dala_Dala_lig"/>
    <property type="match status" value="1"/>
</dbReference>
<dbReference type="InterPro" id="IPR011761">
    <property type="entry name" value="ATP-grasp"/>
</dbReference>
<dbReference type="InterPro" id="IPR013815">
    <property type="entry name" value="ATP_grasp_subdomain_1"/>
</dbReference>
<dbReference type="InterPro" id="IPR000291">
    <property type="entry name" value="D-Ala_lig_Van_CS"/>
</dbReference>
<dbReference type="InterPro" id="IPR005905">
    <property type="entry name" value="D_ala_D_ala"/>
</dbReference>
<dbReference type="InterPro" id="IPR011095">
    <property type="entry name" value="Dala_Dala_lig_C"/>
</dbReference>
<dbReference type="InterPro" id="IPR011127">
    <property type="entry name" value="Dala_Dala_lig_N"/>
</dbReference>
<dbReference type="InterPro" id="IPR016185">
    <property type="entry name" value="PreATP-grasp_dom_sf"/>
</dbReference>
<dbReference type="NCBIfam" id="TIGR01205">
    <property type="entry name" value="D_ala_D_alaTIGR"/>
    <property type="match status" value="1"/>
</dbReference>
<dbReference type="NCBIfam" id="NF002528">
    <property type="entry name" value="PRK01966.1-4"/>
    <property type="match status" value="1"/>
</dbReference>
<dbReference type="NCBIfam" id="NF002529">
    <property type="entry name" value="PRK01966.1-5"/>
    <property type="match status" value="1"/>
</dbReference>
<dbReference type="PANTHER" id="PTHR23132">
    <property type="entry name" value="D-ALANINE--D-ALANINE LIGASE"/>
    <property type="match status" value="1"/>
</dbReference>
<dbReference type="PANTHER" id="PTHR23132:SF25">
    <property type="entry name" value="D-ALANINE--D-ALANINE LIGASE A"/>
    <property type="match status" value="1"/>
</dbReference>
<dbReference type="Pfam" id="PF07478">
    <property type="entry name" value="Dala_Dala_lig_C"/>
    <property type="match status" value="1"/>
</dbReference>
<dbReference type="Pfam" id="PF01820">
    <property type="entry name" value="Dala_Dala_lig_N"/>
    <property type="match status" value="1"/>
</dbReference>
<dbReference type="PIRSF" id="PIRSF039102">
    <property type="entry name" value="Ddl/VanB"/>
    <property type="match status" value="1"/>
</dbReference>
<dbReference type="SUPFAM" id="SSF56059">
    <property type="entry name" value="Glutathione synthetase ATP-binding domain-like"/>
    <property type="match status" value="1"/>
</dbReference>
<dbReference type="SUPFAM" id="SSF52440">
    <property type="entry name" value="PreATP-grasp domain"/>
    <property type="match status" value="1"/>
</dbReference>
<dbReference type="PROSITE" id="PS50975">
    <property type="entry name" value="ATP_GRASP"/>
    <property type="match status" value="1"/>
</dbReference>
<dbReference type="PROSITE" id="PS00843">
    <property type="entry name" value="DALA_DALA_LIGASE_1"/>
    <property type="match status" value="1"/>
</dbReference>
<dbReference type="PROSITE" id="PS00844">
    <property type="entry name" value="DALA_DALA_LIGASE_2"/>
    <property type="match status" value="1"/>
</dbReference>
<keyword id="KW-0067">ATP-binding</keyword>
<keyword id="KW-0133">Cell shape</keyword>
<keyword id="KW-0961">Cell wall biogenesis/degradation</keyword>
<keyword id="KW-0963">Cytoplasm</keyword>
<keyword id="KW-0436">Ligase</keyword>
<keyword id="KW-0460">Magnesium</keyword>
<keyword id="KW-0464">Manganese</keyword>
<keyword id="KW-0479">Metal-binding</keyword>
<keyword id="KW-0547">Nucleotide-binding</keyword>
<keyword id="KW-0573">Peptidoglycan synthesis</keyword>
<proteinExistence type="inferred from homology"/>
<organism>
    <name type="scientific">Streptococcus pneumoniae (strain P1031)</name>
    <dbReference type="NCBI Taxonomy" id="488223"/>
    <lineage>
        <taxon>Bacteria</taxon>
        <taxon>Bacillati</taxon>
        <taxon>Bacillota</taxon>
        <taxon>Bacilli</taxon>
        <taxon>Lactobacillales</taxon>
        <taxon>Streptococcaceae</taxon>
        <taxon>Streptococcus</taxon>
    </lineage>
</organism>
<evidence type="ECO:0000250" key="1"/>
<evidence type="ECO:0000255" key="2">
    <source>
        <dbReference type="HAMAP-Rule" id="MF_00047"/>
    </source>
</evidence>
<reference key="1">
    <citation type="journal article" date="2010" name="Genome Biol.">
        <title>Structure and dynamics of the pan-genome of Streptococcus pneumoniae and closely related species.</title>
        <authorList>
            <person name="Donati C."/>
            <person name="Hiller N.L."/>
            <person name="Tettelin H."/>
            <person name="Muzzi A."/>
            <person name="Croucher N.J."/>
            <person name="Angiuoli S.V."/>
            <person name="Oggioni M."/>
            <person name="Dunning Hotopp J.C."/>
            <person name="Hu F.Z."/>
            <person name="Riley D.R."/>
            <person name="Covacci A."/>
            <person name="Mitchell T.J."/>
            <person name="Bentley S.D."/>
            <person name="Kilian M."/>
            <person name="Ehrlich G.D."/>
            <person name="Rappuoli R."/>
            <person name="Moxon E.R."/>
            <person name="Masignani V."/>
        </authorList>
    </citation>
    <scope>NUCLEOTIDE SEQUENCE [LARGE SCALE GENOMIC DNA]</scope>
    <source>
        <strain>P1031</strain>
    </source>
</reference>
<comment type="function">
    <text evidence="2">Cell wall formation.</text>
</comment>
<comment type="catalytic activity">
    <reaction evidence="2">
        <text>2 D-alanine + ATP = D-alanyl-D-alanine + ADP + phosphate + H(+)</text>
        <dbReference type="Rhea" id="RHEA:11224"/>
        <dbReference type="ChEBI" id="CHEBI:15378"/>
        <dbReference type="ChEBI" id="CHEBI:30616"/>
        <dbReference type="ChEBI" id="CHEBI:43474"/>
        <dbReference type="ChEBI" id="CHEBI:57416"/>
        <dbReference type="ChEBI" id="CHEBI:57822"/>
        <dbReference type="ChEBI" id="CHEBI:456216"/>
        <dbReference type="EC" id="6.3.2.4"/>
    </reaction>
</comment>
<comment type="cofactor">
    <cofactor evidence="1">
        <name>Mg(2+)</name>
        <dbReference type="ChEBI" id="CHEBI:18420"/>
    </cofactor>
    <cofactor evidence="1">
        <name>Mn(2+)</name>
        <dbReference type="ChEBI" id="CHEBI:29035"/>
    </cofactor>
    <text evidence="1">Binds 2 magnesium or manganese ions per subunit.</text>
</comment>
<comment type="pathway">
    <text evidence="2">Cell wall biogenesis; peptidoglycan biosynthesis.</text>
</comment>
<comment type="subcellular location">
    <subcellularLocation>
        <location evidence="2">Cytoplasm</location>
    </subcellularLocation>
</comment>
<comment type="similarity">
    <text evidence="2">Belongs to the D-alanine--D-alanine ligase family.</text>
</comment>
<gene>
    <name evidence="2" type="primary">ddl</name>
    <name type="ordered locus">SPP_1689</name>
</gene>
<protein>
    <recommendedName>
        <fullName evidence="2">D-alanine--D-alanine ligase</fullName>
        <ecNumber evidence="2">6.3.2.4</ecNumber>
    </recommendedName>
    <alternativeName>
        <fullName evidence="2">D-Ala-D-Ala ligase</fullName>
    </alternativeName>
    <alternativeName>
        <fullName evidence="2">D-alanylalanine synthetase</fullName>
    </alternativeName>
</protein>
<feature type="chain" id="PRO_1000189749" description="D-alanine--D-alanine ligase">
    <location>
        <begin position="1"/>
        <end position="347"/>
    </location>
</feature>
<feature type="domain" description="ATP-grasp" evidence="2">
    <location>
        <begin position="131"/>
        <end position="333"/>
    </location>
</feature>
<feature type="binding site" evidence="2">
    <location>
        <begin position="161"/>
        <end position="216"/>
    </location>
    <ligand>
        <name>ATP</name>
        <dbReference type="ChEBI" id="CHEBI:30616"/>
    </ligand>
</feature>
<feature type="binding site" evidence="2">
    <location>
        <position position="287"/>
    </location>
    <ligand>
        <name>Mg(2+)</name>
        <dbReference type="ChEBI" id="CHEBI:18420"/>
        <label>1</label>
    </ligand>
</feature>
<feature type="binding site" evidence="2">
    <location>
        <position position="300"/>
    </location>
    <ligand>
        <name>Mg(2+)</name>
        <dbReference type="ChEBI" id="CHEBI:18420"/>
        <label>1</label>
    </ligand>
</feature>
<feature type="binding site" evidence="2">
    <location>
        <position position="300"/>
    </location>
    <ligand>
        <name>Mg(2+)</name>
        <dbReference type="ChEBI" id="CHEBI:18420"/>
        <label>2</label>
    </ligand>
</feature>
<feature type="binding site" evidence="2">
    <location>
        <position position="302"/>
    </location>
    <ligand>
        <name>Mg(2+)</name>
        <dbReference type="ChEBI" id="CHEBI:18420"/>
        <label>2</label>
    </ligand>
</feature>
<sequence length="347" mass="38687">MKQTIILLYGGRSAEREVSVLSAESVMRAVNYDRFTVKTFFISQSGDFIKTQEFSHAPGQEDRLMTNETIDWDKKVAPSAIYEEGAVVFPVLHGPMGEDGSVQGFLEVLKMPYVGCNILSSSLAMDKITTKRVLESAGIAQVPYVAIVEGDDVTAKIAEVEEKLAYPVFAKPSNMGSSVGISKSENQEELRQALKLAFRYDSRVLVEQGVNAREIEVGLLGNYDVKSTLPGEVVKDVAFYDYDAKYIDNKITMDIPAKISDDVVAVMRQNAETAFRAIGGLGLSRCDFFYTDKGEIFLNELNTMPGFTQWSMYPLLWDNMGISYPELIERLVDLAKESFDKREAHLI</sequence>
<name>DDL_STRZP</name>